<name>SLB_DABPA</name>
<keyword id="KW-0903">Direct protein sequencing</keyword>
<keyword id="KW-1015">Disulfide bond</keyword>
<keyword id="KW-1199">Hemostasis impairing toxin</keyword>
<keyword id="KW-1201">Platelet aggregation inhibiting toxin</keyword>
<keyword id="KW-0964">Secreted</keyword>
<keyword id="KW-0800">Toxin</keyword>
<protein>
    <recommendedName>
        <fullName>Snaclec VP12 subunit B</fullName>
    </recommendedName>
</protein>
<evidence type="ECO:0000255" key="1">
    <source>
        <dbReference type="PROSITE-ProRule" id="PRU00040"/>
    </source>
</evidence>
<evidence type="ECO:0000269" key="2">
    <source>
    </source>
</evidence>
<evidence type="ECO:0000305" key="3"/>
<reference key="1">
    <citation type="journal article" date="2009" name="Cancer Biol. Ther.">
        <title>Effect of VP12 and viperistatin on inhibition of collagen-receptor-dependent melanoma metastasis.</title>
        <authorList>
            <person name="Staniszewska I."/>
            <person name="Walsh E.M."/>
            <person name="Rothman V.L."/>
            <person name="Gaathon A."/>
            <person name="Tuszynski G.P."/>
            <person name="Calvete J.J."/>
            <person name="Lazarovici P."/>
            <person name="Marcinkiewicz C."/>
        </authorList>
    </citation>
    <scope>PROTEIN SEQUENCE</scope>
    <scope>FUNCTION</scope>
    <scope>SUBUNIT</scope>
    <scope>IDENTIFICATION BY MASS SPECTROMETRY</scope>
    <source>
        <tissue>Venom</tissue>
    </source>
</reference>
<organism>
    <name type="scientific">Daboia palaestinae</name>
    <name type="common">Palestine viper</name>
    <name type="synonym">Vipera palaestinae</name>
    <dbReference type="NCBI Taxonomy" id="1170828"/>
    <lineage>
        <taxon>Eukaryota</taxon>
        <taxon>Metazoa</taxon>
        <taxon>Chordata</taxon>
        <taxon>Craniata</taxon>
        <taxon>Vertebrata</taxon>
        <taxon>Euteleostomi</taxon>
        <taxon>Lepidosauria</taxon>
        <taxon>Squamata</taxon>
        <taxon>Bifurcata</taxon>
        <taxon>Unidentata</taxon>
        <taxon>Episquamata</taxon>
        <taxon>Toxicofera</taxon>
        <taxon>Serpentes</taxon>
        <taxon>Colubroidea</taxon>
        <taxon>Viperidae</taxon>
        <taxon>Viperinae</taxon>
        <taxon>Daboia</taxon>
    </lineage>
</organism>
<accession>P0DJL5</accession>
<feature type="chain" id="PRO_0000422554" description="Snaclec VP12 subunit B">
    <location>
        <begin position="1"/>
        <end position="125"/>
    </location>
</feature>
<feature type="domain" description="C-type lectin" evidence="1">
    <location>
        <begin position="11"/>
        <end position="122"/>
    </location>
</feature>
<feature type="disulfide bond" evidence="1">
    <location>
        <begin position="4"/>
        <end position="15"/>
    </location>
</feature>
<feature type="disulfide bond" evidence="1">
    <location>
        <begin position="32"/>
        <end position="121"/>
    </location>
</feature>
<feature type="disulfide bond" description="Interchain (with C-85 in subunit beta)" evidence="1">
    <location>
        <position position="77"/>
    </location>
</feature>
<feature type="disulfide bond" evidence="1">
    <location>
        <begin position="98"/>
        <end position="113"/>
    </location>
</feature>
<comment type="function">
    <text evidence="2">Inhibits integrin alpha-2/beta-1- (ITGA2/ITGB1) dependent melanoma metastasis.</text>
</comment>
<comment type="subunit">
    <text evidence="2">Heterodimer of subunits alpha and beta; disulfide-linked.</text>
</comment>
<comment type="subcellular location">
    <subcellularLocation>
        <location>Secreted</location>
    </subcellularLocation>
</comment>
<comment type="tissue specificity">
    <text>Expressed by the venom gland.</text>
</comment>
<comment type="similarity">
    <text evidence="3">Belongs to the snaclec family.</text>
</comment>
<sequence length="125" mass="15157">DQDCLPGWSYFEKYCYKVFQVKKNWEDAEKFCTEEVKDGHLISLHSNEEVEFMTSLAFPILKYDIVWMGLRNFWRDCPWKWSDDAKLDYKAWSDEPNCYGAMTTDYQWLRWNCNDPRYFVCKSPA</sequence>
<dbReference type="SMR" id="P0DJL5"/>
<dbReference type="GO" id="GO:0005576">
    <property type="term" value="C:extracellular region"/>
    <property type="evidence" value="ECO:0007669"/>
    <property type="project" value="UniProtKB-SubCell"/>
</dbReference>
<dbReference type="GO" id="GO:0090729">
    <property type="term" value="F:toxin activity"/>
    <property type="evidence" value="ECO:0007669"/>
    <property type="project" value="UniProtKB-KW"/>
</dbReference>
<dbReference type="FunFam" id="3.10.100.10:FF:000087">
    <property type="entry name" value="Snaclec rhodocetin subunit delta"/>
    <property type="match status" value="1"/>
</dbReference>
<dbReference type="Gene3D" id="3.10.100.10">
    <property type="entry name" value="Mannose-Binding Protein A, subunit A"/>
    <property type="match status" value="1"/>
</dbReference>
<dbReference type="InterPro" id="IPR001304">
    <property type="entry name" value="C-type_lectin-like"/>
</dbReference>
<dbReference type="InterPro" id="IPR016186">
    <property type="entry name" value="C-type_lectin-like/link_sf"/>
</dbReference>
<dbReference type="InterPro" id="IPR050111">
    <property type="entry name" value="C-type_lectin/snaclec_domain"/>
</dbReference>
<dbReference type="InterPro" id="IPR018378">
    <property type="entry name" value="C-type_lectin_CS"/>
</dbReference>
<dbReference type="InterPro" id="IPR016187">
    <property type="entry name" value="CTDL_fold"/>
</dbReference>
<dbReference type="PANTHER" id="PTHR22803">
    <property type="entry name" value="MANNOSE, PHOSPHOLIPASE, LECTIN RECEPTOR RELATED"/>
    <property type="match status" value="1"/>
</dbReference>
<dbReference type="Pfam" id="PF00059">
    <property type="entry name" value="Lectin_C"/>
    <property type="match status" value="1"/>
</dbReference>
<dbReference type="SMART" id="SM00034">
    <property type="entry name" value="CLECT"/>
    <property type="match status" value="1"/>
</dbReference>
<dbReference type="SUPFAM" id="SSF56436">
    <property type="entry name" value="C-type lectin-like"/>
    <property type="match status" value="1"/>
</dbReference>
<dbReference type="PROSITE" id="PS00615">
    <property type="entry name" value="C_TYPE_LECTIN_1"/>
    <property type="match status" value="1"/>
</dbReference>
<dbReference type="PROSITE" id="PS50041">
    <property type="entry name" value="C_TYPE_LECTIN_2"/>
    <property type="match status" value="1"/>
</dbReference>
<proteinExistence type="evidence at protein level"/>